<reference key="1">
    <citation type="journal article" date="2005" name="J. Bacteriol.">
        <title>Insights on evolution of virulence and resistance from the complete genome analysis of an early methicillin-resistant Staphylococcus aureus strain and a biofilm-producing methicillin-resistant Staphylococcus epidermidis strain.</title>
        <authorList>
            <person name="Gill S.R."/>
            <person name="Fouts D.E."/>
            <person name="Archer G.L."/>
            <person name="Mongodin E.F."/>
            <person name="DeBoy R.T."/>
            <person name="Ravel J."/>
            <person name="Paulsen I.T."/>
            <person name="Kolonay J.F."/>
            <person name="Brinkac L.M."/>
            <person name="Beanan M.J."/>
            <person name="Dodson R.J."/>
            <person name="Daugherty S.C."/>
            <person name="Madupu R."/>
            <person name="Angiuoli S.V."/>
            <person name="Durkin A.S."/>
            <person name="Haft D.H."/>
            <person name="Vamathevan J.J."/>
            <person name="Khouri H."/>
            <person name="Utterback T.R."/>
            <person name="Lee C."/>
            <person name="Dimitrov G."/>
            <person name="Jiang L."/>
            <person name="Qin H."/>
            <person name="Weidman J."/>
            <person name="Tran K."/>
            <person name="Kang K.H."/>
            <person name="Hance I.R."/>
            <person name="Nelson K.E."/>
            <person name="Fraser C.M."/>
        </authorList>
    </citation>
    <scope>NUCLEOTIDE SEQUENCE [LARGE SCALE GENOMIC DNA]</scope>
    <source>
        <strain>ATCC 35984 / DSM 28319 / BCRC 17069 / CCUG 31568 / BM 3577 / RP62A</strain>
    </source>
</reference>
<feature type="chain" id="PRO_0000155900" description="Ribonuclease Z">
    <location>
        <begin position="1"/>
        <end position="306"/>
    </location>
</feature>
<feature type="active site" description="Proton acceptor" evidence="1">
    <location>
        <position position="67"/>
    </location>
</feature>
<feature type="binding site" evidence="1">
    <location>
        <position position="63"/>
    </location>
    <ligand>
        <name>Zn(2+)</name>
        <dbReference type="ChEBI" id="CHEBI:29105"/>
        <label>1</label>
        <note>catalytic</note>
    </ligand>
</feature>
<feature type="binding site" evidence="1">
    <location>
        <position position="65"/>
    </location>
    <ligand>
        <name>Zn(2+)</name>
        <dbReference type="ChEBI" id="CHEBI:29105"/>
        <label>1</label>
        <note>catalytic</note>
    </ligand>
</feature>
<feature type="binding site" evidence="1">
    <location>
        <position position="67"/>
    </location>
    <ligand>
        <name>Zn(2+)</name>
        <dbReference type="ChEBI" id="CHEBI:29105"/>
        <label>2</label>
        <note>catalytic</note>
    </ligand>
</feature>
<feature type="binding site" evidence="1">
    <location>
        <position position="68"/>
    </location>
    <ligand>
        <name>Zn(2+)</name>
        <dbReference type="ChEBI" id="CHEBI:29105"/>
        <label>2</label>
        <note>catalytic</note>
    </ligand>
</feature>
<feature type="binding site" evidence="1">
    <location>
        <position position="141"/>
    </location>
    <ligand>
        <name>Zn(2+)</name>
        <dbReference type="ChEBI" id="CHEBI:29105"/>
        <label>1</label>
        <note>catalytic</note>
    </ligand>
</feature>
<feature type="binding site" evidence="1">
    <location>
        <position position="211"/>
    </location>
    <ligand>
        <name>Zn(2+)</name>
        <dbReference type="ChEBI" id="CHEBI:29105"/>
        <label>1</label>
        <note>catalytic</note>
    </ligand>
</feature>
<feature type="binding site" evidence="1">
    <location>
        <position position="211"/>
    </location>
    <ligand>
        <name>Zn(2+)</name>
        <dbReference type="ChEBI" id="CHEBI:29105"/>
        <label>2</label>
        <note>catalytic</note>
    </ligand>
</feature>
<feature type="binding site" evidence="1">
    <location>
        <position position="269"/>
    </location>
    <ligand>
        <name>Zn(2+)</name>
        <dbReference type="ChEBI" id="CHEBI:29105"/>
        <label>2</label>
        <note>catalytic</note>
    </ligand>
</feature>
<evidence type="ECO:0000255" key="1">
    <source>
        <dbReference type="HAMAP-Rule" id="MF_01818"/>
    </source>
</evidence>
<gene>
    <name evidence="1" type="primary">rnz</name>
    <name type="ordered locus">SERP1066</name>
</gene>
<name>RNZ_STAEQ</name>
<organism>
    <name type="scientific">Staphylococcus epidermidis (strain ATCC 35984 / DSM 28319 / BCRC 17069 / CCUG 31568 / BM 3577 / RP62A)</name>
    <dbReference type="NCBI Taxonomy" id="176279"/>
    <lineage>
        <taxon>Bacteria</taxon>
        <taxon>Bacillati</taxon>
        <taxon>Bacillota</taxon>
        <taxon>Bacilli</taxon>
        <taxon>Bacillales</taxon>
        <taxon>Staphylococcaceae</taxon>
        <taxon>Staphylococcus</taxon>
    </lineage>
</organism>
<protein>
    <recommendedName>
        <fullName evidence="1">Ribonuclease Z</fullName>
        <shortName evidence="1">RNase Z</shortName>
        <ecNumber evidence="1">3.1.26.11</ecNumber>
    </recommendedName>
    <alternativeName>
        <fullName evidence="1">tRNA 3 endonuclease</fullName>
    </alternativeName>
    <alternativeName>
        <fullName evidence="1">tRNase Z</fullName>
    </alternativeName>
</protein>
<keyword id="KW-0255">Endonuclease</keyword>
<keyword id="KW-0378">Hydrolase</keyword>
<keyword id="KW-0479">Metal-binding</keyword>
<keyword id="KW-0540">Nuclease</keyword>
<keyword id="KW-1185">Reference proteome</keyword>
<keyword id="KW-0819">tRNA processing</keyword>
<keyword id="KW-0862">Zinc</keyword>
<comment type="function">
    <text evidence="1">Zinc phosphodiesterase, which displays some tRNA 3'-processing endonuclease activity. Probably involved in tRNA maturation, by removing a 3'-trailer from precursor tRNA.</text>
</comment>
<comment type="catalytic activity">
    <reaction evidence="1">
        <text>Endonucleolytic cleavage of RNA, removing extra 3' nucleotides from tRNA precursor, generating 3' termini of tRNAs. A 3'-hydroxy group is left at the tRNA terminus and a 5'-phosphoryl group is left at the trailer molecule.</text>
        <dbReference type="EC" id="3.1.26.11"/>
    </reaction>
</comment>
<comment type="cofactor">
    <cofactor evidence="1">
        <name>Zn(2+)</name>
        <dbReference type="ChEBI" id="CHEBI:29105"/>
    </cofactor>
    <text evidence="1">Binds 2 Zn(2+) ions.</text>
</comment>
<comment type="subunit">
    <text evidence="1">Homodimer.</text>
</comment>
<comment type="similarity">
    <text evidence="1">Belongs to the RNase Z family.</text>
</comment>
<accession>Q5HP47</accession>
<dbReference type="EC" id="3.1.26.11" evidence="1"/>
<dbReference type="EMBL" id="CP000029">
    <property type="protein sequence ID" value="AAW54424.1"/>
    <property type="molecule type" value="Genomic_DNA"/>
</dbReference>
<dbReference type="RefSeq" id="WP_001831008.1">
    <property type="nucleotide sequence ID" value="NC_002976.3"/>
</dbReference>
<dbReference type="SMR" id="Q5HP47"/>
<dbReference type="STRING" id="176279.SERP1066"/>
<dbReference type="GeneID" id="50018694"/>
<dbReference type="KEGG" id="ser:SERP1066"/>
<dbReference type="eggNOG" id="COG1234">
    <property type="taxonomic scope" value="Bacteria"/>
</dbReference>
<dbReference type="HOGENOM" id="CLU_031317_2_0_9"/>
<dbReference type="Proteomes" id="UP000000531">
    <property type="component" value="Chromosome"/>
</dbReference>
<dbReference type="GO" id="GO:0042781">
    <property type="term" value="F:3'-tRNA processing endoribonuclease activity"/>
    <property type="evidence" value="ECO:0007669"/>
    <property type="project" value="UniProtKB-UniRule"/>
</dbReference>
<dbReference type="GO" id="GO:0008270">
    <property type="term" value="F:zinc ion binding"/>
    <property type="evidence" value="ECO:0007669"/>
    <property type="project" value="UniProtKB-UniRule"/>
</dbReference>
<dbReference type="CDD" id="cd07717">
    <property type="entry name" value="RNaseZ_ZiPD-like_MBL-fold"/>
    <property type="match status" value="1"/>
</dbReference>
<dbReference type="FunFam" id="3.60.15.10:FF:000002">
    <property type="entry name" value="Ribonuclease Z"/>
    <property type="match status" value="1"/>
</dbReference>
<dbReference type="Gene3D" id="3.60.15.10">
    <property type="entry name" value="Ribonuclease Z/Hydroxyacylglutathione hydrolase-like"/>
    <property type="match status" value="1"/>
</dbReference>
<dbReference type="HAMAP" id="MF_01818">
    <property type="entry name" value="RNase_Z_BN"/>
    <property type="match status" value="1"/>
</dbReference>
<dbReference type="InterPro" id="IPR001279">
    <property type="entry name" value="Metallo-B-lactamas"/>
</dbReference>
<dbReference type="InterPro" id="IPR036866">
    <property type="entry name" value="RibonucZ/Hydroxyglut_hydro"/>
</dbReference>
<dbReference type="InterPro" id="IPR013471">
    <property type="entry name" value="RNase_Z/BN"/>
</dbReference>
<dbReference type="NCBIfam" id="NF000801">
    <property type="entry name" value="PRK00055.1-3"/>
    <property type="match status" value="1"/>
</dbReference>
<dbReference type="NCBIfam" id="TIGR02651">
    <property type="entry name" value="RNase_Z"/>
    <property type="match status" value="1"/>
</dbReference>
<dbReference type="PANTHER" id="PTHR46018">
    <property type="entry name" value="ZINC PHOSPHODIESTERASE ELAC PROTEIN 1"/>
    <property type="match status" value="1"/>
</dbReference>
<dbReference type="PANTHER" id="PTHR46018:SF2">
    <property type="entry name" value="ZINC PHOSPHODIESTERASE ELAC PROTEIN 1"/>
    <property type="match status" value="1"/>
</dbReference>
<dbReference type="Pfam" id="PF12706">
    <property type="entry name" value="Lactamase_B_2"/>
    <property type="match status" value="1"/>
</dbReference>
<dbReference type="SUPFAM" id="SSF56281">
    <property type="entry name" value="Metallo-hydrolase/oxidoreductase"/>
    <property type="match status" value="1"/>
</dbReference>
<sequence>MEVTFFGTSAGLPTKERNTQSIALNLEPYSNSIWLFDVGEGTQHQILRHSIKLGKIDHIFITHMHGDHIFGLPGLLTSRSFQGGENKPLTIIGPKGIQNYIETSLQLSESHLNYPITYIEINQQLAYHHNGFTVQAEMLNHGIPSFGYRIEAPITPGTINVEALRGIGLEPGPKYQEVKLQETFEYKGLIYNSDDFKGKAKPGPIISIFGDTKPCENEYELAKNSDLMIHEATYIEGDKKLANNYHHSHIDDVFNLIKQANVNKSLITHISNRYNIDEVTSIYNELSLDQTSPHFYFVKDFDTFKI</sequence>
<proteinExistence type="inferred from homology"/>